<protein>
    <recommendedName>
        <fullName evidence="1">tRNA (guanine-N(1)-)-methyltransferase</fullName>
        <ecNumber evidence="1">2.1.1.228</ecNumber>
    </recommendedName>
    <alternativeName>
        <fullName evidence="1">M1G-methyltransferase</fullName>
    </alternativeName>
    <alternativeName>
        <fullName evidence="1">tRNA [GM37] methyltransferase</fullName>
    </alternativeName>
</protein>
<dbReference type="EC" id="2.1.1.228" evidence="1"/>
<dbReference type="EMBL" id="AE017332">
    <property type="protein sequence ID" value="AAV27410.1"/>
    <property type="molecule type" value="Genomic_DNA"/>
</dbReference>
<dbReference type="RefSeq" id="WP_011205933.1">
    <property type="nucleotide sequence ID" value="NC_006360.1"/>
</dbReference>
<dbReference type="SMR" id="Q601V6"/>
<dbReference type="KEGG" id="mhy:mhp095"/>
<dbReference type="eggNOG" id="COG0336">
    <property type="taxonomic scope" value="Bacteria"/>
</dbReference>
<dbReference type="HOGENOM" id="CLU_047363_0_1_14"/>
<dbReference type="PhylomeDB" id="Q601V6"/>
<dbReference type="Proteomes" id="UP000006822">
    <property type="component" value="Chromosome"/>
</dbReference>
<dbReference type="GO" id="GO:0005829">
    <property type="term" value="C:cytosol"/>
    <property type="evidence" value="ECO:0007669"/>
    <property type="project" value="TreeGrafter"/>
</dbReference>
<dbReference type="GO" id="GO:0052906">
    <property type="term" value="F:tRNA (guanine(37)-N1)-methyltransferase activity"/>
    <property type="evidence" value="ECO:0007669"/>
    <property type="project" value="UniProtKB-UniRule"/>
</dbReference>
<dbReference type="GO" id="GO:0002939">
    <property type="term" value="P:tRNA N1-guanine methylation"/>
    <property type="evidence" value="ECO:0007669"/>
    <property type="project" value="TreeGrafter"/>
</dbReference>
<dbReference type="CDD" id="cd18080">
    <property type="entry name" value="TrmD-like"/>
    <property type="match status" value="1"/>
</dbReference>
<dbReference type="FunFam" id="3.40.1280.10:FF:000001">
    <property type="entry name" value="tRNA (guanine-N(1)-)-methyltransferase"/>
    <property type="match status" value="1"/>
</dbReference>
<dbReference type="Gene3D" id="3.40.1280.10">
    <property type="match status" value="1"/>
</dbReference>
<dbReference type="Gene3D" id="1.10.1270.20">
    <property type="entry name" value="tRNA(m1g37)methyltransferase, domain 2"/>
    <property type="match status" value="1"/>
</dbReference>
<dbReference type="HAMAP" id="MF_00605">
    <property type="entry name" value="TrmD"/>
    <property type="match status" value="1"/>
</dbReference>
<dbReference type="InterPro" id="IPR029028">
    <property type="entry name" value="Alpha/beta_knot_MTases"/>
</dbReference>
<dbReference type="InterPro" id="IPR023148">
    <property type="entry name" value="tRNA_m1G_MeTrfase_C_sf"/>
</dbReference>
<dbReference type="InterPro" id="IPR002649">
    <property type="entry name" value="tRNA_m1G_MeTrfase_TrmD"/>
</dbReference>
<dbReference type="InterPro" id="IPR029026">
    <property type="entry name" value="tRNA_m1G_MTases_N"/>
</dbReference>
<dbReference type="InterPro" id="IPR016009">
    <property type="entry name" value="tRNA_MeTrfase_TRMD/TRM10"/>
</dbReference>
<dbReference type="NCBIfam" id="NF000648">
    <property type="entry name" value="PRK00026.1"/>
    <property type="match status" value="1"/>
</dbReference>
<dbReference type="NCBIfam" id="TIGR00088">
    <property type="entry name" value="trmD"/>
    <property type="match status" value="1"/>
</dbReference>
<dbReference type="PANTHER" id="PTHR46417">
    <property type="entry name" value="TRNA (GUANINE-N(1)-)-METHYLTRANSFERASE"/>
    <property type="match status" value="1"/>
</dbReference>
<dbReference type="PANTHER" id="PTHR46417:SF1">
    <property type="entry name" value="TRNA (GUANINE-N(1)-)-METHYLTRANSFERASE"/>
    <property type="match status" value="1"/>
</dbReference>
<dbReference type="Pfam" id="PF01746">
    <property type="entry name" value="tRNA_m1G_MT"/>
    <property type="match status" value="1"/>
</dbReference>
<dbReference type="PIRSF" id="PIRSF000386">
    <property type="entry name" value="tRNA_mtase"/>
    <property type="match status" value="1"/>
</dbReference>
<dbReference type="SUPFAM" id="SSF75217">
    <property type="entry name" value="alpha/beta knot"/>
    <property type="match status" value="1"/>
</dbReference>
<keyword id="KW-0963">Cytoplasm</keyword>
<keyword id="KW-0489">Methyltransferase</keyword>
<keyword id="KW-0949">S-adenosyl-L-methionine</keyword>
<keyword id="KW-0808">Transferase</keyword>
<keyword id="KW-0819">tRNA processing</keyword>
<name>TRMD_MESH2</name>
<sequence length="227" mass="26086">MKINILTLFPRYFEVFCRESIIGKAIKHKKITINVVNFRDFSKNKHKKVDDYVYGGGPGLLLQIQPVVDALEKVGGLKIALSPQGQKFDQGVARKLAKEDEITILCGHYEGFDQRIIDNFIDFELSLGDFILTGGEIAAMAIIDAIIRLKPDIINPESLKNETFNDFLLDFPQYSRPANFRGLEVPNVLISGNHREIGEWRQEQRELITKKKRPDLWEKFLKIKNKK</sequence>
<gene>
    <name evidence="1" type="primary">trmD</name>
    <name type="ordered locus">mhp095</name>
</gene>
<accession>Q601V6</accession>
<reference key="1">
    <citation type="journal article" date="2004" name="J. Bacteriol.">
        <title>The genome sequence of Mycoplasma hyopneumoniae strain 232, the agent of swine mycoplasmosis.</title>
        <authorList>
            <person name="Minion F.C."/>
            <person name="Lefkowitz E.J."/>
            <person name="Madsen M.L."/>
            <person name="Cleary B.J."/>
            <person name="Swartzell S.M."/>
            <person name="Mahairas G.G."/>
        </authorList>
    </citation>
    <scope>NUCLEOTIDE SEQUENCE [LARGE SCALE GENOMIC DNA]</scope>
    <source>
        <strain>232</strain>
    </source>
</reference>
<comment type="function">
    <text evidence="1">Specifically methylates guanosine-37 in various tRNAs.</text>
</comment>
<comment type="catalytic activity">
    <reaction evidence="1">
        <text>guanosine(37) in tRNA + S-adenosyl-L-methionine = N(1)-methylguanosine(37) in tRNA + S-adenosyl-L-homocysteine + H(+)</text>
        <dbReference type="Rhea" id="RHEA:36899"/>
        <dbReference type="Rhea" id="RHEA-COMP:10145"/>
        <dbReference type="Rhea" id="RHEA-COMP:10147"/>
        <dbReference type="ChEBI" id="CHEBI:15378"/>
        <dbReference type="ChEBI" id="CHEBI:57856"/>
        <dbReference type="ChEBI" id="CHEBI:59789"/>
        <dbReference type="ChEBI" id="CHEBI:73542"/>
        <dbReference type="ChEBI" id="CHEBI:74269"/>
        <dbReference type="EC" id="2.1.1.228"/>
    </reaction>
</comment>
<comment type="subunit">
    <text evidence="1">Homodimer.</text>
</comment>
<comment type="subcellular location">
    <subcellularLocation>
        <location evidence="1">Cytoplasm</location>
    </subcellularLocation>
</comment>
<comment type="similarity">
    <text evidence="1">Belongs to the RNA methyltransferase TrmD family.</text>
</comment>
<evidence type="ECO:0000255" key="1">
    <source>
        <dbReference type="HAMAP-Rule" id="MF_00605"/>
    </source>
</evidence>
<organism>
    <name type="scientific">Mesomycoplasma hyopneumoniae (strain 232)</name>
    <name type="common">Mycoplasma hyopneumoniae</name>
    <dbReference type="NCBI Taxonomy" id="295358"/>
    <lineage>
        <taxon>Bacteria</taxon>
        <taxon>Bacillati</taxon>
        <taxon>Mycoplasmatota</taxon>
        <taxon>Mycoplasmoidales</taxon>
        <taxon>Metamycoplasmataceae</taxon>
        <taxon>Mesomycoplasma</taxon>
    </lineage>
</organism>
<proteinExistence type="inferred from homology"/>
<feature type="chain" id="PRO_0000060413" description="tRNA (guanine-N(1)-)-methyltransferase">
    <location>
        <begin position="1"/>
        <end position="227"/>
    </location>
</feature>
<feature type="binding site" evidence="1">
    <location>
        <position position="107"/>
    </location>
    <ligand>
        <name>S-adenosyl-L-methionine</name>
        <dbReference type="ChEBI" id="CHEBI:59789"/>
    </ligand>
</feature>
<feature type="binding site" evidence="1">
    <location>
        <begin position="127"/>
        <end position="132"/>
    </location>
    <ligand>
        <name>S-adenosyl-L-methionine</name>
        <dbReference type="ChEBI" id="CHEBI:59789"/>
    </ligand>
</feature>